<organismHost>
    <name type="scientific">Cervus elaphus</name>
    <name type="common">Red deer</name>
    <dbReference type="NCBI Taxonomy" id="9860"/>
</organismHost>
<organismHost>
    <name type="scientific">Rangifer tarandus</name>
    <name type="common">Reindeer</name>
    <name type="synonym">Cervus tarandus</name>
    <dbReference type="NCBI Taxonomy" id="9870"/>
</organismHost>
<proteinExistence type="inferred from homology"/>
<organism>
    <name type="scientific">European elk papillomavirus</name>
    <name type="common">EEPV</name>
    <dbReference type="NCBI Taxonomy" id="2885846"/>
    <lineage>
        <taxon>Viruses</taxon>
        <taxon>Monodnaviria</taxon>
        <taxon>Shotokuvirae</taxon>
        <taxon>Cossaviricota</taxon>
        <taxon>Papovaviricetes</taxon>
        <taxon>Zurhausenvirales</taxon>
        <taxon>Papillomaviridae</taxon>
        <taxon>Firstpapillomavirinae</taxon>
        <taxon>Deltapapillomavirus</taxon>
        <taxon>Deltapapillomavirus 1</taxon>
    </lineage>
</organism>
<name>VE5_PAPVE</name>
<feature type="chain" id="PRO_0000133303" description="Protein E5">
    <location>
        <begin position="1"/>
        <end position="43"/>
    </location>
</feature>
<evidence type="ECO:0000305" key="1"/>
<keyword id="KW-0244">Early protein</keyword>
<keyword id="KW-1185">Reference proteome</keyword>
<reference key="1">
    <citation type="journal article" date="1986" name="Gene">
        <title>Organization and expression of the transforming region from the European elk papillomavirus (EEPV).</title>
        <authorList>
            <person name="Ahola H."/>
            <person name="Bergman P."/>
            <person name="Stroem A.C."/>
            <person name="Moreno-Lopez J."/>
            <person name="Petterson U."/>
        </authorList>
    </citation>
    <scope>NUCLEOTIDE SEQUENCE [GENOMIC DNA]</scope>
</reference>
<comment type="similarity">
    <text evidence="1">Belongs to the papillomaviridae E5 protein family.</text>
</comment>
<accession>P11330</accession>
<protein>
    <recommendedName>
        <fullName>Protein E5</fullName>
    </recommendedName>
</protein>
<dbReference type="EMBL" id="M15953">
    <property type="protein sequence ID" value="AAA66858.1"/>
    <property type="molecule type" value="Genomic_DNA"/>
</dbReference>
<dbReference type="PIR" id="E29499">
    <property type="entry name" value="W5WLEP"/>
</dbReference>
<dbReference type="RefSeq" id="NP_041310.1">
    <property type="nucleotide sequence ID" value="NC_001524.1"/>
</dbReference>
<dbReference type="GeneID" id="1488993"/>
<dbReference type="KEGG" id="vg:1488993"/>
<dbReference type="Proteomes" id="UP000009060">
    <property type="component" value="Genome"/>
</dbReference>
<dbReference type="InterPro" id="IPR012555">
    <property type="entry name" value="EPV_E5"/>
</dbReference>
<dbReference type="Pfam" id="PF08135">
    <property type="entry name" value="EPV_E5"/>
    <property type="match status" value="1"/>
</dbReference>
<dbReference type="PIRSF" id="PIRSF003401">
    <property type="entry name" value="EPV_E5"/>
    <property type="match status" value="1"/>
</dbReference>
<sequence length="43" mass="5182">MTYGLLLFLGLTFGLQLMLLVFLLFFFLVWWDQFGCRCENMQL</sequence>
<gene>
    <name type="primary">E5</name>
</gene>